<gene>
    <name evidence="1" type="primary">slyX</name>
    <name type="ordered locus">PA14_51850</name>
</gene>
<evidence type="ECO:0000255" key="1">
    <source>
        <dbReference type="HAMAP-Rule" id="MF_00715"/>
    </source>
</evidence>
<name>SLYX_PSEAB</name>
<sequence length="69" mass="7821">MELDARMDDLECRQAFQDDTLQALNDVVVEQQRSIERLQLQVAALIKRLEDVQGLVGEAGEDEAPPPHY</sequence>
<proteinExistence type="inferred from homology"/>
<comment type="similarity">
    <text evidence="1">Belongs to the SlyX family.</text>
</comment>
<reference key="1">
    <citation type="journal article" date="2006" name="Genome Biol.">
        <title>Genomic analysis reveals that Pseudomonas aeruginosa virulence is combinatorial.</title>
        <authorList>
            <person name="Lee D.G."/>
            <person name="Urbach J.M."/>
            <person name="Wu G."/>
            <person name="Liberati N.T."/>
            <person name="Feinbaum R.L."/>
            <person name="Miyata S."/>
            <person name="Diggins L.T."/>
            <person name="He J."/>
            <person name="Saucier M."/>
            <person name="Deziel E."/>
            <person name="Friedman L."/>
            <person name="Li L."/>
            <person name="Grills G."/>
            <person name="Montgomery K."/>
            <person name="Kucherlapati R."/>
            <person name="Rahme L.G."/>
            <person name="Ausubel F.M."/>
        </authorList>
    </citation>
    <scope>NUCLEOTIDE SEQUENCE [LARGE SCALE GENOMIC DNA]</scope>
    <source>
        <strain>UCBPP-PA14</strain>
    </source>
</reference>
<accession>Q02IC2</accession>
<dbReference type="EMBL" id="CP000438">
    <property type="protein sequence ID" value="ABJ10121.1"/>
    <property type="molecule type" value="Genomic_DNA"/>
</dbReference>
<dbReference type="RefSeq" id="WP_003086099.1">
    <property type="nucleotide sequence ID" value="NZ_CP034244.1"/>
</dbReference>
<dbReference type="SMR" id="Q02IC2"/>
<dbReference type="KEGG" id="pau:PA14_51850"/>
<dbReference type="PseudoCAP" id="PA14_51850"/>
<dbReference type="HOGENOM" id="CLU_180796_4_1_6"/>
<dbReference type="BioCyc" id="PAER208963:G1G74-4362-MONOMER"/>
<dbReference type="Proteomes" id="UP000000653">
    <property type="component" value="Chromosome"/>
</dbReference>
<dbReference type="Gene3D" id="1.20.5.300">
    <property type="match status" value="1"/>
</dbReference>
<dbReference type="HAMAP" id="MF_00715">
    <property type="entry name" value="SlyX"/>
    <property type="match status" value="1"/>
</dbReference>
<dbReference type="InterPro" id="IPR007236">
    <property type="entry name" value="SlyX"/>
</dbReference>
<dbReference type="NCBIfam" id="NF001421">
    <property type="entry name" value="PRK00295.1"/>
    <property type="match status" value="1"/>
</dbReference>
<dbReference type="PANTHER" id="PTHR36508">
    <property type="entry name" value="PROTEIN SLYX"/>
    <property type="match status" value="1"/>
</dbReference>
<dbReference type="PANTHER" id="PTHR36508:SF1">
    <property type="entry name" value="PROTEIN SLYX"/>
    <property type="match status" value="1"/>
</dbReference>
<dbReference type="Pfam" id="PF04102">
    <property type="entry name" value="SlyX"/>
    <property type="match status" value="1"/>
</dbReference>
<organism>
    <name type="scientific">Pseudomonas aeruginosa (strain UCBPP-PA14)</name>
    <dbReference type="NCBI Taxonomy" id="208963"/>
    <lineage>
        <taxon>Bacteria</taxon>
        <taxon>Pseudomonadati</taxon>
        <taxon>Pseudomonadota</taxon>
        <taxon>Gammaproteobacteria</taxon>
        <taxon>Pseudomonadales</taxon>
        <taxon>Pseudomonadaceae</taxon>
        <taxon>Pseudomonas</taxon>
    </lineage>
</organism>
<feature type="chain" id="PRO_1000045725" description="Protein SlyX homolog">
    <location>
        <begin position="1"/>
        <end position="69"/>
    </location>
</feature>
<protein>
    <recommendedName>
        <fullName evidence="1">Protein SlyX homolog</fullName>
    </recommendedName>
</protein>